<organism>
    <name type="scientific">Cronobacter sakazakii (strain ATCC BAA-894)</name>
    <name type="common">Enterobacter sakazakii</name>
    <dbReference type="NCBI Taxonomy" id="290339"/>
    <lineage>
        <taxon>Bacteria</taxon>
        <taxon>Pseudomonadati</taxon>
        <taxon>Pseudomonadota</taxon>
        <taxon>Gammaproteobacteria</taxon>
        <taxon>Enterobacterales</taxon>
        <taxon>Enterobacteriaceae</taxon>
        <taxon>Cronobacter</taxon>
    </lineage>
</organism>
<proteinExistence type="inferred from homology"/>
<reference key="1">
    <citation type="journal article" date="2010" name="PLoS ONE">
        <title>Genome sequence of Cronobacter sakazakii BAA-894 and comparative genomic hybridization analysis with other Cronobacter species.</title>
        <authorList>
            <person name="Kucerova E."/>
            <person name="Clifton S.W."/>
            <person name="Xia X.Q."/>
            <person name="Long F."/>
            <person name="Porwollik S."/>
            <person name="Fulton L."/>
            <person name="Fronick C."/>
            <person name="Minx P."/>
            <person name="Kyung K."/>
            <person name="Warren W."/>
            <person name="Fulton R."/>
            <person name="Feng D."/>
            <person name="Wollam A."/>
            <person name="Shah N."/>
            <person name="Bhonagiri V."/>
            <person name="Nash W.E."/>
            <person name="Hallsworth-Pepin K."/>
            <person name="Wilson R.K."/>
            <person name="McClelland M."/>
            <person name="Forsythe S.J."/>
        </authorList>
    </citation>
    <scope>NUCLEOTIDE SEQUENCE [LARGE SCALE GENOMIC DNA]</scope>
    <source>
        <strain>ATCC BAA-894</strain>
    </source>
</reference>
<keyword id="KW-1185">Reference proteome</keyword>
<keyword id="KW-0687">Ribonucleoprotein</keyword>
<keyword id="KW-0689">Ribosomal protein</keyword>
<keyword id="KW-0694">RNA-binding</keyword>
<keyword id="KW-0699">rRNA-binding</keyword>
<protein>
    <recommendedName>
        <fullName evidence="1">Large ribosomal subunit protein uL14</fullName>
    </recommendedName>
    <alternativeName>
        <fullName evidence="2">50S ribosomal protein L14</fullName>
    </alternativeName>
</protein>
<feature type="chain" id="PRO_1000055578" description="Large ribosomal subunit protein uL14">
    <location>
        <begin position="1"/>
        <end position="123"/>
    </location>
</feature>
<evidence type="ECO:0000255" key="1">
    <source>
        <dbReference type="HAMAP-Rule" id="MF_01367"/>
    </source>
</evidence>
<evidence type="ECO:0000305" key="2"/>
<dbReference type="EMBL" id="CP000783">
    <property type="protein sequence ID" value="ABU75324.1"/>
    <property type="molecule type" value="Genomic_DNA"/>
</dbReference>
<dbReference type="RefSeq" id="WP_004388611.1">
    <property type="nucleotide sequence ID" value="NC_009778.1"/>
</dbReference>
<dbReference type="SMR" id="A7MPH4"/>
<dbReference type="GeneID" id="92804600"/>
<dbReference type="KEGG" id="esa:ESA_00015"/>
<dbReference type="HOGENOM" id="CLU_095071_2_1_6"/>
<dbReference type="Proteomes" id="UP000000260">
    <property type="component" value="Chromosome"/>
</dbReference>
<dbReference type="GO" id="GO:0022625">
    <property type="term" value="C:cytosolic large ribosomal subunit"/>
    <property type="evidence" value="ECO:0007669"/>
    <property type="project" value="TreeGrafter"/>
</dbReference>
<dbReference type="GO" id="GO:0070180">
    <property type="term" value="F:large ribosomal subunit rRNA binding"/>
    <property type="evidence" value="ECO:0007669"/>
    <property type="project" value="TreeGrafter"/>
</dbReference>
<dbReference type="GO" id="GO:0003735">
    <property type="term" value="F:structural constituent of ribosome"/>
    <property type="evidence" value="ECO:0007669"/>
    <property type="project" value="InterPro"/>
</dbReference>
<dbReference type="GO" id="GO:0006412">
    <property type="term" value="P:translation"/>
    <property type="evidence" value="ECO:0007669"/>
    <property type="project" value="UniProtKB-UniRule"/>
</dbReference>
<dbReference type="CDD" id="cd00337">
    <property type="entry name" value="Ribosomal_uL14"/>
    <property type="match status" value="1"/>
</dbReference>
<dbReference type="FunFam" id="2.40.150.20:FF:000001">
    <property type="entry name" value="50S ribosomal protein L14"/>
    <property type="match status" value="1"/>
</dbReference>
<dbReference type="Gene3D" id="2.40.150.20">
    <property type="entry name" value="Ribosomal protein L14"/>
    <property type="match status" value="1"/>
</dbReference>
<dbReference type="HAMAP" id="MF_01367">
    <property type="entry name" value="Ribosomal_uL14"/>
    <property type="match status" value="1"/>
</dbReference>
<dbReference type="InterPro" id="IPR000218">
    <property type="entry name" value="Ribosomal_uL14"/>
</dbReference>
<dbReference type="InterPro" id="IPR005745">
    <property type="entry name" value="Ribosomal_uL14_bac-type"/>
</dbReference>
<dbReference type="InterPro" id="IPR019972">
    <property type="entry name" value="Ribosomal_uL14_CS"/>
</dbReference>
<dbReference type="InterPro" id="IPR036853">
    <property type="entry name" value="Ribosomal_uL14_sf"/>
</dbReference>
<dbReference type="NCBIfam" id="TIGR01067">
    <property type="entry name" value="rplN_bact"/>
    <property type="match status" value="1"/>
</dbReference>
<dbReference type="PANTHER" id="PTHR11761">
    <property type="entry name" value="50S/60S RIBOSOMAL PROTEIN L14/L23"/>
    <property type="match status" value="1"/>
</dbReference>
<dbReference type="PANTHER" id="PTHR11761:SF3">
    <property type="entry name" value="LARGE RIBOSOMAL SUBUNIT PROTEIN UL14M"/>
    <property type="match status" value="1"/>
</dbReference>
<dbReference type="Pfam" id="PF00238">
    <property type="entry name" value="Ribosomal_L14"/>
    <property type="match status" value="1"/>
</dbReference>
<dbReference type="SMART" id="SM01374">
    <property type="entry name" value="Ribosomal_L14"/>
    <property type="match status" value="1"/>
</dbReference>
<dbReference type="SUPFAM" id="SSF50193">
    <property type="entry name" value="Ribosomal protein L14"/>
    <property type="match status" value="1"/>
</dbReference>
<dbReference type="PROSITE" id="PS00049">
    <property type="entry name" value="RIBOSOMAL_L14"/>
    <property type="match status" value="1"/>
</dbReference>
<name>RL14_CROS8</name>
<sequence>MIQEQTMLNVADNSGARRVMCIKVLGGSHRRYAGVGDIIKITIKEAIPRGKVKKGDVLKAVVVRTKKGVRRPDGSVVRFDGNACVLLNNNSEQPIGTRIFGPVTRELRSEKFMKIISLAPEVL</sequence>
<comment type="function">
    <text evidence="1">Binds to 23S rRNA. Forms part of two intersubunit bridges in the 70S ribosome.</text>
</comment>
<comment type="subunit">
    <text evidence="1">Part of the 50S ribosomal subunit. Forms a cluster with proteins L3 and L19. In the 70S ribosome, L14 and L19 interact and together make contacts with the 16S rRNA in bridges B5 and B8.</text>
</comment>
<comment type="similarity">
    <text evidence="1">Belongs to the universal ribosomal protein uL14 family.</text>
</comment>
<accession>A7MPH4</accession>
<gene>
    <name evidence="1" type="primary">rplN</name>
    <name type="ordered locus">ESA_00015</name>
</gene>